<protein>
    <recommendedName>
        <fullName evidence="7">Basic phospholipase A2 homolog GodMT-II</fullName>
        <shortName>svPLA2 homolog</shortName>
    </recommendedName>
    <alternativeName>
        <fullName evidence="7">Myotoxin II</fullName>
    </alternativeName>
</protein>
<evidence type="ECO:0000250" key="1">
    <source>
        <dbReference type="UniProtKB" id="I6L8L6"/>
    </source>
</evidence>
<evidence type="ECO:0000250" key="2">
    <source>
        <dbReference type="UniProtKB" id="P24605"/>
    </source>
</evidence>
<evidence type="ECO:0000269" key="3">
    <source>
    </source>
</evidence>
<evidence type="ECO:0000269" key="4">
    <source>
    </source>
</evidence>
<evidence type="ECO:0000269" key="5">
    <source>
    </source>
</evidence>
<evidence type="ECO:0000269" key="6">
    <source>
    </source>
</evidence>
<evidence type="ECO:0000303" key="7">
    <source>
    </source>
</evidence>
<evidence type="ECO:0000305" key="8"/>
<evidence type="ECO:0000305" key="9">
    <source>
    </source>
</evidence>
<evidence type="ECO:0000305" key="10">
    <source>
    </source>
</evidence>
<evidence type="ECO:0007744" key="11">
    <source>
        <dbReference type="PDB" id="1GOD"/>
    </source>
</evidence>
<evidence type="ECO:0007829" key="12">
    <source>
        <dbReference type="PDB" id="1GOD"/>
    </source>
</evidence>
<name>PA2H2_CERGO</name>
<sequence>SMYQLWKMILQETGKNAVPSYGLYGCNCGVGSRGKPKDATDRCCFVHKCCYKKLTDCSPKTDSYSYSWKDKTIVCGDNNPCLQEMCECDKAVAICLRENLDTYNKNYKIYPKPLCKKADAC</sequence>
<accession>P81165</accession>
<keyword id="KW-0002">3D-structure</keyword>
<keyword id="KW-0903">Direct protein sequencing</keyword>
<keyword id="KW-1015">Disulfide bond</keyword>
<keyword id="KW-0959">Myotoxin</keyword>
<keyword id="KW-0964">Secreted</keyword>
<keyword id="KW-0800">Toxin</keyword>
<dbReference type="PDB" id="1GOD">
    <property type="method" value="X-ray"/>
    <property type="resolution" value="2.80 A"/>
    <property type="chains" value="A=1-111"/>
</dbReference>
<dbReference type="PDBsum" id="1GOD"/>
<dbReference type="SMR" id="P81165"/>
<dbReference type="EvolutionaryTrace" id="P81165"/>
<dbReference type="GO" id="GO:0005576">
    <property type="term" value="C:extracellular region"/>
    <property type="evidence" value="ECO:0007669"/>
    <property type="project" value="UniProtKB-SubCell"/>
</dbReference>
<dbReference type="GO" id="GO:0005509">
    <property type="term" value="F:calcium ion binding"/>
    <property type="evidence" value="ECO:0007669"/>
    <property type="project" value="InterPro"/>
</dbReference>
<dbReference type="GO" id="GO:0047498">
    <property type="term" value="F:calcium-dependent phospholipase A2 activity"/>
    <property type="evidence" value="ECO:0007669"/>
    <property type="project" value="TreeGrafter"/>
</dbReference>
<dbReference type="GO" id="GO:0005543">
    <property type="term" value="F:phospholipid binding"/>
    <property type="evidence" value="ECO:0007669"/>
    <property type="project" value="TreeGrafter"/>
</dbReference>
<dbReference type="GO" id="GO:0090729">
    <property type="term" value="F:toxin activity"/>
    <property type="evidence" value="ECO:0007669"/>
    <property type="project" value="UniProtKB-KW"/>
</dbReference>
<dbReference type="GO" id="GO:0050482">
    <property type="term" value="P:arachidonate secretion"/>
    <property type="evidence" value="ECO:0007669"/>
    <property type="project" value="InterPro"/>
</dbReference>
<dbReference type="GO" id="GO:0016042">
    <property type="term" value="P:lipid catabolic process"/>
    <property type="evidence" value="ECO:0007669"/>
    <property type="project" value="InterPro"/>
</dbReference>
<dbReference type="GO" id="GO:0042130">
    <property type="term" value="P:negative regulation of T cell proliferation"/>
    <property type="evidence" value="ECO:0007669"/>
    <property type="project" value="TreeGrafter"/>
</dbReference>
<dbReference type="GO" id="GO:0006644">
    <property type="term" value="P:phospholipid metabolic process"/>
    <property type="evidence" value="ECO:0007669"/>
    <property type="project" value="InterPro"/>
</dbReference>
<dbReference type="CDD" id="cd00125">
    <property type="entry name" value="PLA2c"/>
    <property type="match status" value="1"/>
</dbReference>
<dbReference type="FunFam" id="1.20.90.10:FF:000001">
    <property type="entry name" value="Basic phospholipase A2 homolog"/>
    <property type="match status" value="1"/>
</dbReference>
<dbReference type="Gene3D" id="1.20.90.10">
    <property type="entry name" value="Phospholipase A2 domain"/>
    <property type="match status" value="1"/>
</dbReference>
<dbReference type="InterPro" id="IPR001211">
    <property type="entry name" value="PLipase_A2"/>
</dbReference>
<dbReference type="InterPro" id="IPR033112">
    <property type="entry name" value="PLipase_A2_Asp_AS"/>
</dbReference>
<dbReference type="InterPro" id="IPR016090">
    <property type="entry name" value="PLipase_A2_dom"/>
</dbReference>
<dbReference type="InterPro" id="IPR036444">
    <property type="entry name" value="PLipase_A2_dom_sf"/>
</dbReference>
<dbReference type="InterPro" id="IPR033113">
    <property type="entry name" value="PLipase_A2_His_AS"/>
</dbReference>
<dbReference type="PANTHER" id="PTHR11716">
    <property type="entry name" value="PHOSPHOLIPASE A2 FAMILY MEMBER"/>
    <property type="match status" value="1"/>
</dbReference>
<dbReference type="PANTHER" id="PTHR11716:SF9">
    <property type="entry name" value="PHOSPHOLIPASE A2, MEMBRANE ASSOCIATED"/>
    <property type="match status" value="1"/>
</dbReference>
<dbReference type="Pfam" id="PF00068">
    <property type="entry name" value="Phospholip_A2_1"/>
    <property type="match status" value="1"/>
</dbReference>
<dbReference type="PRINTS" id="PR00389">
    <property type="entry name" value="PHPHLIPASEA2"/>
</dbReference>
<dbReference type="SMART" id="SM00085">
    <property type="entry name" value="PA2c"/>
    <property type="match status" value="1"/>
</dbReference>
<dbReference type="SUPFAM" id="SSF48619">
    <property type="entry name" value="Phospholipase A2, PLA2"/>
    <property type="match status" value="1"/>
</dbReference>
<dbReference type="PROSITE" id="PS00119">
    <property type="entry name" value="PA2_ASP"/>
    <property type="match status" value="1"/>
</dbReference>
<dbReference type="PROSITE" id="PS00118">
    <property type="entry name" value="PA2_HIS"/>
    <property type="match status" value="1"/>
</dbReference>
<reference key="1">
    <citation type="journal article" date="1998" name="Biochim. Biophys. Acta">
        <title>Amino acid sequence of a myotoxic Lys49-phospholipase A2 homologue from the venom of Cerrophidion (Bothrops) godmani.</title>
        <authorList>
            <person name="de Sousa M.V."/>
            <person name="Morhy L."/>
            <person name="Arni R.K."/>
            <person name="Ward R.J."/>
            <person name="Diaz C."/>
            <person name="Gutierrez J.M."/>
        </authorList>
    </citation>
    <scope>PROTEIN SEQUENCE</scope>
    <scope>SUBCELLULAR LOCATION</scope>
    <source>
        <tissue>Venom</tissue>
    </source>
</reference>
<reference key="2">
    <citation type="journal article" date="2000" name="Biochem. J.">
        <title>Two phospholipase A2 inhibitors from the plasma of Cerrophidion (Bothrops) godmani which selectively inhibit two different group-II phospholipase A2 myotoxins from its own venom: isolation, molecular cloning and biological properties.</title>
        <authorList>
            <person name="Lizano S."/>
            <person name="Angulo Y."/>
            <person name="Lomonte B."/>
            <person name="Fox J.W."/>
            <person name="Lambeau G."/>
            <person name="Lazdunski M."/>
            <person name="Gutierrez J.M."/>
        </authorList>
    </citation>
    <scope>SUBCELLULAR LOCATION</scope>
    <source>
        <tissue>Venom</tissue>
    </source>
</reference>
<reference key="3">
    <citation type="journal article" date="1992" name="Arch. Biochem. Biophys.">
        <title>Isolation and characterization of basic myotoxic phospholipases A2 from Bothrops godmani (Godman's pit viper) snake venom.</title>
        <authorList>
            <person name="Diaz C."/>
            <person name="Gutierrez J.M."/>
            <person name="Lomonte B."/>
        </authorList>
    </citation>
    <scope>AMINO-ACID COMPOSITION</scope>
    <scope>FUNCTION</scope>
    <scope>TOXIC DOSE</scope>
    <source>
        <tissue>Venom</tissue>
    </source>
</reference>
<reference key="4">
    <citation type="journal article" date="1999" name="Arch. Biochem. Biophys.">
        <title>Crystal structure of myotoxin II, a monomeric Lys49-phospholipase A2 homologue isolated from the venom of Cerrophidion (Bothrops) godmani.</title>
        <authorList>
            <person name="Arni R.K."/>
            <person name="Fontes M.R.M."/>
            <person name="Barberato C."/>
            <person name="Gutierrez J.M."/>
            <person name="Diaz C."/>
            <person name="Ward R.J."/>
        </authorList>
    </citation>
    <scope>X-RAY CRYSTALLOGRAPHY (2.80 ANGSTROMS) OF 1-111</scope>
    <scope>DISULFIDE BONDS</scope>
    <scope>SUBUNIT</scope>
    <source>
        <tissue>Venom</tissue>
    </source>
</reference>
<proteinExistence type="evidence at protein level"/>
<organism>
    <name type="scientific">Cerrophidion godmani</name>
    <name type="common">Porthidium godmani</name>
    <name type="synonym">Bothrops godmani</name>
    <dbReference type="NCBI Taxonomy" id="44722"/>
    <lineage>
        <taxon>Eukaryota</taxon>
        <taxon>Metazoa</taxon>
        <taxon>Chordata</taxon>
        <taxon>Craniata</taxon>
        <taxon>Vertebrata</taxon>
        <taxon>Euteleostomi</taxon>
        <taxon>Lepidosauria</taxon>
        <taxon>Squamata</taxon>
        <taxon>Bifurcata</taxon>
        <taxon>Unidentata</taxon>
        <taxon>Episquamata</taxon>
        <taxon>Toxicofera</taxon>
        <taxon>Serpentes</taxon>
        <taxon>Colubroidea</taxon>
        <taxon>Viperidae</taxon>
        <taxon>Crotalinae</taxon>
        <taxon>Cerrophidion</taxon>
    </lineage>
</organism>
<comment type="function">
    <text evidence="5">Snake venom phospholipase A2 homolog that lacks enzymatic activity but shows high myotoxic activities (PubMed:1524423). In vivo, induces a mild edema when subcutaneously injected into mice foot pad (PubMed:1524423).</text>
</comment>
<comment type="subunit">
    <text evidence="3">Monomer.</text>
</comment>
<comment type="subcellular location">
    <subcellularLocation>
        <location evidence="4 6">Secreted</location>
    </subcellularLocation>
</comment>
<comment type="tissue specificity">
    <text evidence="9 10">Expressed by the venom gland.</text>
</comment>
<comment type="toxic dose">
    <text evidence="5">LD(50) is 4.2 ug/g by intravenous injection into mice.</text>
</comment>
<comment type="miscellaneous">
    <text evidence="4">Is not inhibited by the gamma-phospholipase A2 inhibitor (PLI) CgMIP-I (AC P0DQP7) and by the alpha-PLI CgMIP-II (AC P0DQP8).</text>
</comment>
<comment type="similarity">
    <text evidence="8">Belongs to the phospholipase A2 family. Group II subfamily. K49 sub-subfamily.</text>
</comment>
<comment type="caution">
    <text evidence="8">Does not bind calcium as one of the calcium-binding sites is lost (Asp-&gt;Lys in position 48, which corresponds to 'Lys-49' in the current nomenclature).</text>
</comment>
<feature type="chain" id="PRO_0000161640" description="Basic phospholipase A2 homolog GodMT-II" evidence="6">
    <location>
        <begin position="1"/>
        <end position="121"/>
    </location>
</feature>
<feature type="region of interest" description="Important for membrane-damaging activities in eukaryotes and bacteria; heparin-binding" evidence="2">
    <location>
        <begin position="105"/>
        <end position="117"/>
    </location>
</feature>
<feature type="site" description="Important residue of the cationic membrane-docking site (MDoS)" evidence="1">
    <location>
        <position position="105"/>
    </location>
</feature>
<feature type="site" description="Important residue of the cationic membrane-docking site (MDoS)" evidence="1">
    <location>
        <position position="108"/>
    </location>
</feature>
<feature type="site" description="Cationic membrane-docking site (MDoS)" evidence="1">
    <location>
        <position position="112"/>
    </location>
</feature>
<feature type="site" description="Hydrophobic membrane-disruption site (MDiS)" evidence="1">
    <location>
        <position position="114"/>
    </location>
</feature>
<feature type="site" description="Cationic membrane-docking site (MDoS)" evidence="1">
    <location>
        <position position="117"/>
    </location>
</feature>
<feature type="disulfide bond" evidence="3 11">
    <location>
        <begin position="26"/>
        <end position="115"/>
    </location>
</feature>
<feature type="disulfide bond" evidence="3 11">
    <location>
        <begin position="28"/>
        <end position="44"/>
    </location>
</feature>
<feature type="disulfide bond" evidence="3 11">
    <location>
        <begin position="43"/>
        <end position="95"/>
    </location>
</feature>
<feature type="disulfide bond" evidence="3 11">
    <location>
        <begin position="49"/>
        <end position="121"/>
    </location>
</feature>
<feature type="disulfide bond" evidence="3 11">
    <location>
        <begin position="50"/>
        <end position="88"/>
    </location>
</feature>
<feature type="disulfide bond" evidence="3 11">
    <location>
        <begin position="57"/>
        <end position="81"/>
    </location>
</feature>
<feature type="disulfide bond" evidence="3 11">
    <location>
        <begin position="75"/>
        <end position="86"/>
    </location>
</feature>
<feature type="helix" evidence="12">
    <location>
        <begin position="2"/>
        <end position="13"/>
    </location>
</feature>
<feature type="helix" evidence="12">
    <location>
        <begin position="17"/>
        <end position="20"/>
    </location>
</feature>
<feature type="turn" evidence="12">
    <location>
        <begin position="21"/>
        <end position="23"/>
    </location>
</feature>
<feature type="turn" evidence="12">
    <location>
        <begin position="25"/>
        <end position="28"/>
    </location>
</feature>
<feature type="strand" evidence="12">
    <location>
        <begin position="29"/>
        <end position="31"/>
    </location>
</feature>
<feature type="helix" evidence="12">
    <location>
        <begin position="39"/>
        <end position="51"/>
    </location>
</feature>
<feature type="strand" evidence="12">
    <location>
        <begin position="55"/>
        <end position="57"/>
    </location>
</feature>
<feature type="turn" evidence="12">
    <location>
        <begin position="59"/>
        <end position="61"/>
    </location>
</feature>
<feature type="strand" evidence="12">
    <location>
        <begin position="67"/>
        <end position="71"/>
    </location>
</feature>
<feature type="strand" evidence="12">
    <location>
        <begin position="78"/>
        <end position="80"/>
    </location>
</feature>
<feature type="helix" evidence="12">
    <location>
        <begin position="81"/>
        <end position="98"/>
    </location>
</feature>
<feature type="helix" evidence="12">
    <location>
        <begin position="100"/>
        <end position="102"/>
    </location>
</feature>
<feature type="turn" evidence="12">
    <location>
        <begin position="105"/>
        <end position="109"/>
    </location>
</feature>